<name>CTL2_AEDAL</name>
<protein>
    <recommendedName>
        <fullName evidence="6">Salivary C-type lectin 2</fullName>
        <shortName>Aalb_CTL2</shortName>
    </recommendedName>
</protein>
<sequence>MKLLLSFALLGLVACQEKCDSQNKYCFPNEVATWTGAVEYCLKNGWKLAVVNSEAKQMKIEGLAKNLPEFKNGKVELWIGASDQTKEGHFVWIANGQPIEYANWLPGKPDNKDGKEHCVHLWYEKAKKLNWGWNDVVCTSKRRFVCERKKK</sequence>
<comment type="function">
    <text evidence="4 5">Salivary protein with carbohydrate-binding activity (PubMed:37399114). Binds to D-mannose, D-galactose, D-glucose and maltose (PubMed:37399114). Agglutinates host erythrocytes (PubMed:37399114). Probably participates in mosquito innate immune responses to prevent microorganism multiplication in sugar and blood meals (PubMed:37399114).</text>
</comment>
<comment type="function">
    <text evidence="4">(Microbial infection) Binds to the surface of and agglutinates Escherichia coli in vitro.</text>
</comment>
<comment type="function">
    <text evidence="4">(Microbial infection) Binds to the surface of and agglutinates Pseudomonas aeruginosa in vitro.</text>
</comment>
<comment type="function">
    <text evidence="4">(Microbial infection) Binds to the surface of and agglutinates Bacillus subtilis in vitro.</text>
</comment>
<comment type="function">
    <text evidence="4">(Microbial infection) Agglutinates Staphylococcus aureus in vitro.</text>
</comment>
<comment type="function">
    <text evidence="4">(Microbial infection) Agglutinates Candida albicans in vitro.</text>
</comment>
<comment type="function">
    <text evidence="4">(Microbial infection) Does not affect replication of dengue virus type 2 in host cells.</text>
</comment>
<comment type="cofactor">
    <cofactor evidence="4">
        <name>Ca(2+)</name>
        <dbReference type="ChEBI" id="CHEBI:29108"/>
    </cofactor>
</comment>
<comment type="subcellular location">
    <subcellularLocation>
        <location evidence="6">Secreted</location>
    </subcellularLocation>
</comment>
<comment type="tissue specificity">
    <text evidence="3 4">Expressed in female salivary gland (PubMed:17244540, PubMed:37399114). Not detected or low-level expression in female midgut and fat body (PubMed:37399114).</text>
</comment>
<comment type="induction">
    <text evidence="4">Blood feeding does not affect expression levels.</text>
</comment>
<dbReference type="EMBL" id="AY826069">
    <property type="protein sequence ID" value="AAV90641.1"/>
    <property type="molecule type" value="mRNA"/>
</dbReference>
<dbReference type="SMR" id="Q5MIZ1"/>
<dbReference type="VEuPathDB" id="VectorBase:AALC636_020303"/>
<dbReference type="VEuPathDB" id="VectorBase:AALFPA_048382"/>
<dbReference type="Proteomes" id="UP000069940">
    <property type="component" value="Unplaced"/>
</dbReference>
<dbReference type="GO" id="GO:0005576">
    <property type="term" value="C:extracellular region"/>
    <property type="evidence" value="ECO:0007669"/>
    <property type="project" value="UniProtKB-SubCell"/>
</dbReference>
<dbReference type="GO" id="GO:0030246">
    <property type="term" value="F:carbohydrate binding"/>
    <property type="evidence" value="ECO:0007669"/>
    <property type="project" value="UniProtKB-KW"/>
</dbReference>
<dbReference type="CDD" id="cd00037">
    <property type="entry name" value="CLECT"/>
    <property type="match status" value="1"/>
</dbReference>
<dbReference type="Gene3D" id="3.10.100.10">
    <property type="entry name" value="Mannose-Binding Protein A, subunit A"/>
    <property type="match status" value="1"/>
</dbReference>
<dbReference type="InterPro" id="IPR001304">
    <property type="entry name" value="C-type_lectin-like"/>
</dbReference>
<dbReference type="InterPro" id="IPR016186">
    <property type="entry name" value="C-type_lectin-like/link_sf"/>
</dbReference>
<dbReference type="InterPro" id="IPR050111">
    <property type="entry name" value="C-type_lectin/snaclec_domain"/>
</dbReference>
<dbReference type="InterPro" id="IPR016187">
    <property type="entry name" value="CTDL_fold"/>
</dbReference>
<dbReference type="PANTHER" id="PTHR22803">
    <property type="entry name" value="MANNOSE, PHOSPHOLIPASE, LECTIN RECEPTOR RELATED"/>
    <property type="match status" value="1"/>
</dbReference>
<dbReference type="Pfam" id="PF00059">
    <property type="entry name" value="Lectin_C"/>
    <property type="match status" value="1"/>
</dbReference>
<dbReference type="SMART" id="SM00034">
    <property type="entry name" value="CLECT"/>
    <property type="match status" value="1"/>
</dbReference>
<dbReference type="SUPFAM" id="SSF56436">
    <property type="entry name" value="C-type lectin-like"/>
    <property type="match status" value="1"/>
</dbReference>
<dbReference type="PROSITE" id="PS50041">
    <property type="entry name" value="C_TYPE_LECTIN_2"/>
    <property type="match status" value="1"/>
</dbReference>
<dbReference type="PROSITE" id="PS51257">
    <property type="entry name" value="PROKAR_LIPOPROTEIN"/>
    <property type="match status" value="1"/>
</dbReference>
<organism evidence="7">
    <name type="scientific">Aedes albopictus</name>
    <name type="common">Asian tiger mosquito</name>
    <name type="synonym">Stegomyia albopicta</name>
    <dbReference type="NCBI Taxonomy" id="7160"/>
    <lineage>
        <taxon>Eukaryota</taxon>
        <taxon>Metazoa</taxon>
        <taxon>Ecdysozoa</taxon>
        <taxon>Arthropoda</taxon>
        <taxon>Hexapoda</taxon>
        <taxon>Insecta</taxon>
        <taxon>Pterygota</taxon>
        <taxon>Neoptera</taxon>
        <taxon>Endopterygota</taxon>
        <taxon>Diptera</taxon>
        <taxon>Nematocera</taxon>
        <taxon>Culicoidea</taxon>
        <taxon>Culicidae</taxon>
        <taxon>Culicinae</taxon>
        <taxon>Aedini</taxon>
        <taxon>Aedes</taxon>
        <taxon>Stegomyia</taxon>
    </lineage>
</organism>
<accession>Q5MIZ1</accession>
<keyword id="KW-1015">Disulfide bond</keyword>
<keyword id="KW-0430">Lectin</keyword>
<keyword id="KW-0964">Secreted</keyword>
<keyword id="KW-0732">Signal</keyword>
<reference evidence="7" key="1">
    <citation type="journal article" date="2007" name="Insect Biochem. Mol. Biol.">
        <title>An insight into the sialome of the adult female mosquito Aedes albopictus.</title>
        <authorList>
            <person name="Arca B."/>
            <person name="Lombardo F."/>
            <person name="Francischetti I.M."/>
            <person name="Pham V.M."/>
            <person name="Mestres-Simon M."/>
            <person name="Andersen J.F."/>
            <person name="Ribeiro J.M."/>
        </authorList>
    </citation>
    <scope>NUCLEOTIDE SEQUENCE [LARGE SCALE MRNA]</scope>
    <scope>TISSUE SPECIFICITY</scope>
    <source>
        <tissue evidence="7">Salivary gland</tissue>
    </source>
</reference>
<reference evidence="6" key="2">
    <citation type="journal article" date="2023" name="J. Insect Sci.">
        <title>A C-type lectin in saliva of Aedes albopictus (Diptera: Culicidae) bind and agglutinate microorganisms with broad spectrum.</title>
        <authorList>
            <person name="Lin Z."/>
            <person name="Cheng J."/>
            <person name="Mu X."/>
            <person name="Kuang X."/>
            <person name="Li Z."/>
            <person name="Wu J."/>
        </authorList>
    </citation>
    <scope>FUNCTION</scope>
    <scope>FUNCTION (MICROBIAL INFECTION)</scope>
    <scope>COFACTOR</scope>
    <scope>TISSUE SPECIFICITY</scope>
    <scope>INDUCTION</scope>
</reference>
<proteinExistence type="evidence at transcript level"/>
<feature type="signal peptide" evidence="1">
    <location>
        <begin position="1"/>
        <end position="15"/>
    </location>
</feature>
<feature type="chain" id="PRO_5012565214" description="Salivary C-type lectin 2" evidence="1">
    <location>
        <begin position="16"/>
        <end position="151"/>
    </location>
</feature>
<feature type="domain" description="C-type lectin" evidence="2">
    <location>
        <begin position="25"/>
        <end position="147"/>
    </location>
</feature>
<feature type="disulfide bond" evidence="2">
    <location>
        <begin position="41"/>
        <end position="146"/>
    </location>
</feature>
<feature type="disulfide bond" evidence="2">
    <location>
        <begin position="118"/>
        <end position="138"/>
    </location>
</feature>
<evidence type="ECO:0000255" key="1"/>
<evidence type="ECO:0000255" key="2">
    <source>
        <dbReference type="PROSITE-ProRule" id="PRU00040"/>
    </source>
</evidence>
<evidence type="ECO:0000269" key="3">
    <source>
    </source>
</evidence>
<evidence type="ECO:0000269" key="4">
    <source>
    </source>
</evidence>
<evidence type="ECO:0000303" key="5">
    <source>
    </source>
</evidence>
<evidence type="ECO:0000305" key="6"/>
<evidence type="ECO:0000312" key="7">
    <source>
        <dbReference type="EMBL" id="AAV90641.1"/>
    </source>
</evidence>